<dbReference type="EC" id="3.4.25.2" evidence="1"/>
<dbReference type="EMBL" id="CP001321">
    <property type="protein sequence ID" value="ACL32841.1"/>
    <property type="molecule type" value="Genomic_DNA"/>
</dbReference>
<dbReference type="RefSeq" id="WP_005713804.1">
    <property type="nucleotide sequence ID" value="NC_011852.1"/>
</dbReference>
<dbReference type="SMR" id="B8F689"/>
<dbReference type="STRING" id="557723.HAPS_1248"/>
<dbReference type="MEROPS" id="T01.007"/>
<dbReference type="GeneID" id="66618210"/>
<dbReference type="KEGG" id="hap:HAPS_1248"/>
<dbReference type="HOGENOM" id="CLU_093872_1_0_6"/>
<dbReference type="Proteomes" id="UP000006743">
    <property type="component" value="Chromosome"/>
</dbReference>
<dbReference type="GO" id="GO:0009376">
    <property type="term" value="C:HslUV protease complex"/>
    <property type="evidence" value="ECO:0007669"/>
    <property type="project" value="UniProtKB-UniRule"/>
</dbReference>
<dbReference type="GO" id="GO:0005839">
    <property type="term" value="C:proteasome core complex"/>
    <property type="evidence" value="ECO:0007669"/>
    <property type="project" value="InterPro"/>
</dbReference>
<dbReference type="GO" id="GO:0046872">
    <property type="term" value="F:metal ion binding"/>
    <property type="evidence" value="ECO:0007669"/>
    <property type="project" value="UniProtKB-KW"/>
</dbReference>
<dbReference type="GO" id="GO:0004298">
    <property type="term" value="F:threonine-type endopeptidase activity"/>
    <property type="evidence" value="ECO:0007669"/>
    <property type="project" value="UniProtKB-KW"/>
</dbReference>
<dbReference type="GO" id="GO:0051603">
    <property type="term" value="P:proteolysis involved in protein catabolic process"/>
    <property type="evidence" value="ECO:0007669"/>
    <property type="project" value="InterPro"/>
</dbReference>
<dbReference type="CDD" id="cd01913">
    <property type="entry name" value="protease_HslV"/>
    <property type="match status" value="1"/>
</dbReference>
<dbReference type="FunFam" id="3.60.20.10:FF:000002">
    <property type="entry name" value="ATP-dependent protease subunit HslV"/>
    <property type="match status" value="1"/>
</dbReference>
<dbReference type="Gene3D" id="3.60.20.10">
    <property type="entry name" value="Glutamine Phosphoribosylpyrophosphate, subunit 1, domain 1"/>
    <property type="match status" value="1"/>
</dbReference>
<dbReference type="HAMAP" id="MF_00248">
    <property type="entry name" value="HslV"/>
    <property type="match status" value="1"/>
</dbReference>
<dbReference type="InterPro" id="IPR022281">
    <property type="entry name" value="ATP-dep_Prtase_HsIV_su"/>
</dbReference>
<dbReference type="InterPro" id="IPR029055">
    <property type="entry name" value="Ntn_hydrolases_N"/>
</dbReference>
<dbReference type="InterPro" id="IPR001353">
    <property type="entry name" value="Proteasome_sua/b"/>
</dbReference>
<dbReference type="InterPro" id="IPR023333">
    <property type="entry name" value="Proteasome_suB-type"/>
</dbReference>
<dbReference type="NCBIfam" id="TIGR03692">
    <property type="entry name" value="ATP_dep_HslV"/>
    <property type="match status" value="1"/>
</dbReference>
<dbReference type="NCBIfam" id="NF003964">
    <property type="entry name" value="PRK05456.1"/>
    <property type="match status" value="1"/>
</dbReference>
<dbReference type="PANTHER" id="PTHR32194:SF0">
    <property type="entry name" value="ATP-DEPENDENT PROTEASE SUBUNIT HSLV"/>
    <property type="match status" value="1"/>
</dbReference>
<dbReference type="PANTHER" id="PTHR32194">
    <property type="entry name" value="METALLOPROTEASE TLDD"/>
    <property type="match status" value="1"/>
</dbReference>
<dbReference type="Pfam" id="PF00227">
    <property type="entry name" value="Proteasome"/>
    <property type="match status" value="1"/>
</dbReference>
<dbReference type="PIRSF" id="PIRSF039093">
    <property type="entry name" value="HslV"/>
    <property type="match status" value="1"/>
</dbReference>
<dbReference type="SUPFAM" id="SSF56235">
    <property type="entry name" value="N-terminal nucleophile aminohydrolases (Ntn hydrolases)"/>
    <property type="match status" value="1"/>
</dbReference>
<dbReference type="PROSITE" id="PS51476">
    <property type="entry name" value="PROTEASOME_BETA_2"/>
    <property type="match status" value="1"/>
</dbReference>
<accession>B8F689</accession>
<sequence>MTTIVCVRKDGKVAIGGDGQATLGNCVEKGTVRKVRRLYKDKVVTGFAGSTADAFILRDLFEKKLELHQGHLVKSAVELAKEWRTERSLRKLEAMMIVANESEFLLVSGSGDVIEPEFDVLAIGSGGNYAKAAALALLRTENNLSAKEIVAEALKIAGDIDIYSNHNHVIEEV</sequence>
<evidence type="ECO:0000255" key="1">
    <source>
        <dbReference type="HAMAP-Rule" id="MF_00248"/>
    </source>
</evidence>
<reference key="1">
    <citation type="journal article" date="2009" name="J. Bacteriol.">
        <title>Complete genome sequence of Haemophilus parasuis SH0165.</title>
        <authorList>
            <person name="Yue M."/>
            <person name="Yang F."/>
            <person name="Yang J."/>
            <person name="Bei W."/>
            <person name="Cai X."/>
            <person name="Chen L."/>
            <person name="Dong J."/>
            <person name="Zhou R."/>
            <person name="Jin M."/>
            <person name="Jin Q."/>
            <person name="Chen H."/>
        </authorList>
    </citation>
    <scope>NUCLEOTIDE SEQUENCE [LARGE SCALE GENOMIC DNA]</scope>
    <source>
        <strain>SH0165</strain>
    </source>
</reference>
<feature type="chain" id="PRO_1000125409" description="ATP-dependent protease subunit HslV">
    <location>
        <begin position="1"/>
        <end position="173"/>
    </location>
</feature>
<feature type="active site" evidence="1">
    <location>
        <position position="2"/>
    </location>
</feature>
<feature type="binding site" evidence="1">
    <location>
        <position position="158"/>
    </location>
    <ligand>
        <name>Na(+)</name>
        <dbReference type="ChEBI" id="CHEBI:29101"/>
    </ligand>
</feature>
<feature type="binding site" evidence="1">
    <location>
        <position position="161"/>
    </location>
    <ligand>
        <name>Na(+)</name>
        <dbReference type="ChEBI" id="CHEBI:29101"/>
    </ligand>
</feature>
<feature type="binding site" evidence="1">
    <location>
        <position position="164"/>
    </location>
    <ligand>
        <name>Na(+)</name>
        <dbReference type="ChEBI" id="CHEBI:29101"/>
    </ligand>
</feature>
<gene>
    <name evidence="1" type="primary">hslV</name>
    <name type="ordered locus">HAPS_1248</name>
</gene>
<comment type="function">
    <text evidence="1">Protease subunit of a proteasome-like degradation complex believed to be a general protein degrading machinery.</text>
</comment>
<comment type="catalytic activity">
    <reaction evidence="1">
        <text>ATP-dependent cleavage of peptide bonds with broad specificity.</text>
        <dbReference type="EC" id="3.4.25.2"/>
    </reaction>
</comment>
<comment type="activity regulation">
    <text evidence="1">Allosterically activated by HslU binding.</text>
</comment>
<comment type="subunit">
    <text evidence="1">A double ring-shaped homohexamer of HslV is capped on each side by a ring-shaped HslU homohexamer. The assembly of the HslU/HslV complex is dependent on binding of ATP.</text>
</comment>
<comment type="subcellular location">
    <subcellularLocation>
        <location evidence="1">Cytoplasm</location>
    </subcellularLocation>
</comment>
<comment type="similarity">
    <text evidence="1">Belongs to the peptidase T1B family. HslV subfamily.</text>
</comment>
<proteinExistence type="inferred from homology"/>
<keyword id="KW-0021">Allosteric enzyme</keyword>
<keyword id="KW-0963">Cytoplasm</keyword>
<keyword id="KW-0378">Hydrolase</keyword>
<keyword id="KW-0479">Metal-binding</keyword>
<keyword id="KW-0645">Protease</keyword>
<keyword id="KW-1185">Reference proteome</keyword>
<keyword id="KW-0915">Sodium</keyword>
<keyword id="KW-0888">Threonine protease</keyword>
<protein>
    <recommendedName>
        <fullName evidence="1">ATP-dependent protease subunit HslV</fullName>
        <ecNumber evidence="1">3.4.25.2</ecNumber>
    </recommendedName>
</protein>
<organism>
    <name type="scientific">Glaesserella parasuis serovar 5 (strain SH0165)</name>
    <name type="common">Haemophilus parasuis</name>
    <dbReference type="NCBI Taxonomy" id="557723"/>
    <lineage>
        <taxon>Bacteria</taxon>
        <taxon>Pseudomonadati</taxon>
        <taxon>Pseudomonadota</taxon>
        <taxon>Gammaproteobacteria</taxon>
        <taxon>Pasteurellales</taxon>
        <taxon>Pasteurellaceae</taxon>
        <taxon>Glaesserella</taxon>
    </lineage>
</organism>
<name>HSLV_GLAP5</name>